<keyword id="KW-0020">Allergen</keyword>
<keyword id="KW-0147">Chitin-binding</keyword>
<keyword id="KW-1015">Disulfide bond</keyword>
<keyword id="KW-0325">Glycoprotein</keyword>
<keyword id="KW-1185">Reference proteome</keyword>
<keyword id="KW-0964">Secreted</keyword>
<keyword id="KW-0732">Signal</keyword>
<evidence type="ECO:0000255" key="1"/>
<evidence type="ECO:0000255" key="2">
    <source>
        <dbReference type="PROSITE-ProRule" id="PRU00144"/>
    </source>
</evidence>
<evidence type="ECO:0000255" key="3">
    <source>
        <dbReference type="PROSITE-ProRule" id="PRU00498"/>
    </source>
</evidence>
<evidence type="ECO:0000255" key="4">
    <source>
        <dbReference type="PROSITE-ProRule" id="PRU01258"/>
    </source>
</evidence>
<evidence type="ECO:0000269" key="5">
    <source>
    </source>
</evidence>
<evidence type="ECO:0000269" key="6">
    <source>
    </source>
</evidence>
<evidence type="ECO:0000269" key="7">
    <source>
    </source>
</evidence>
<evidence type="ECO:0000303" key="8">
    <source>
    </source>
</evidence>
<evidence type="ECO:0000303" key="9">
    <source>
    </source>
</evidence>
<evidence type="ECO:0000303" key="10">
    <source>
    </source>
</evidence>
<evidence type="ECO:0000305" key="11"/>
<evidence type="ECO:0000305" key="12">
    <source>
    </source>
</evidence>
<evidence type="ECO:0000305" key="13">
    <source>
    </source>
</evidence>
<evidence type="ECO:0000312" key="14">
    <source>
        <dbReference type="EMBL" id="AAY84563.1"/>
    </source>
</evidence>
<sequence length="462" mass="52012">MTRLSFTVLIFLAAYFGSNIRPNVATLDPKTVCYYESWVHWRQGDGKMDPEDIDTSLCSHIVYSYFGIDASSHEIKLLDQYLMITLHDMEHFTKHKGNAKAMIAVGGASMSDQFSKTAAVEHYRETFVVSTIDLMTKYGFDGVMIDWSGMQAKDSDNFVKLLDKFDEKFAQTSFVMGVTLPATIASYDNYNIPAISNYVDFMNVLTLDYDGPWAYTVGHASALPEQLKTLEAYNKRGAPRHKMVMAVPFFARTWILEKMDKQDVGDKASGPGPKGQFTQTPGFLSYNELCVQIQAETNAFSITRDHDNTAIYAVYVHDNHAEWISFEDRHTLGDKARNITEQGYGGMSVYTLSNEDVHGVCGDKNPLLHAINSNYFRGIVTEPTVVTVTPVTHTTEHVTDIPGVFHCHQEGFFRDKTYCAKYYECKKGDFGLEQTVHHCPNHSQAFDEVSRTCVDHAKIPGC</sequence>
<accession>Q4JK71</accession>
<protein>
    <recommendedName>
        <fullName evidence="11">Chitinase-like mite allergen Der p 18.0101</fullName>
    </recommendedName>
    <alternativeName>
        <fullName evidence="8 9 10">Allergen Der p 18</fullName>
    </alternativeName>
    <alternativeName>
        <fullName evidence="9 10">Chitinase-like house dust mite allergen Der p 18</fullName>
    </alternativeName>
    <alternativeName>
        <fullName evidence="14">Group 18 allergen protein</fullName>
    </alternativeName>
    <allergenName evidence="11">Der p 18.0101</allergenName>
</protein>
<comment type="function">
    <text evidence="7 12">Probably a non-catalytic chitinase-like protein, which binds to insoluble chitin and enhances the activity of the catalytic chitinases (PubMed:16776685). Has weak chitin-binding activity (PubMed:27548813).</text>
</comment>
<comment type="subcellular location">
    <subcellularLocation>
        <location evidence="7">Secreted</location>
    </subcellularLocation>
</comment>
<comment type="tissue specificity">
    <text evidence="7">Expressed in the peritrophic matrix of the midgut, and only very weakly in fecal pellets.</text>
</comment>
<comment type="allergen">
    <text evidence="5 6 7">Causes an allergic reaction in human (PubMed:16776685, PubMed:23075813, PubMed:27548813). Recombinant protein binds to IgE in 63% of the 27 patients tested allergic to house dust mite (HDM) (PubMed:16776685). The recombinant protein has 38%, 16% and 3% prevalences of IgE-binding with titers equal or above 0.1 ng/ml, 0.84 ng/ml and 10 ng/ml, respectively, of the 37 adult patients tested living in Perth, Australia allergic to European HDM (PubMed:23075813). Recombinant protein binds to IgE in 10% of the 91 adult Austrian patients tested allergic to European HDM. Binds to IgE in 15% of both the 20 and 13 patients tested with respiratory (asthma and allergic rhinitis) or skin (atopic dermatitis) manifestations, respectively. Induces activation of human basophils (PubMed:27548813).</text>
</comment>
<comment type="similarity">
    <text evidence="11">Belongs to the glycosyl hydrolase 18 family. Chitinase class II subfamily.</text>
</comment>
<comment type="caution">
    <text evidence="12 13">Although it belongs to the glycosyl hydrolase 18 family, Ser-148 is present instead of the conserved Glu which is an active site residue. Therefore this protein may lack chitinase activity.</text>
</comment>
<feature type="signal peptide" evidence="1">
    <location>
        <begin position="1"/>
        <end position="25"/>
    </location>
</feature>
<feature type="chain" id="PRO_5004239394" description="Chitinase-like mite allergen Der p 18.0101" evidence="1">
    <location>
        <begin position="26"/>
        <end position="462"/>
    </location>
</feature>
<feature type="domain" description="GH18" evidence="4">
    <location>
        <begin position="29"/>
        <end position="378"/>
    </location>
</feature>
<feature type="domain" description="Chitin-binding type-2" evidence="2">
    <location>
        <begin position="404"/>
        <end position="462"/>
    </location>
</feature>
<feature type="glycosylation site" description="N-linked (GlcNAc...) asparagine" evidence="3">
    <location>
        <position position="338"/>
    </location>
</feature>
<feature type="glycosylation site" description="N-linked (GlcNAc...) asparagine" evidence="3">
    <location>
        <position position="441"/>
    </location>
</feature>
<feature type="disulfide bond" evidence="4">
    <location>
        <begin position="33"/>
        <end position="58"/>
    </location>
</feature>
<feature type="disulfide bond" evidence="2">
    <location>
        <begin position="439"/>
        <end position="453"/>
    </location>
</feature>
<organism evidence="14">
    <name type="scientific">Dermatophagoides pteronyssinus</name>
    <name type="common">European house dust mite</name>
    <dbReference type="NCBI Taxonomy" id="6956"/>
    <lineage>
        <taxon>Eukaryota</taxon>
        <taxon>Metazoa</taxon>
        <taxon>Ecdysozoa</taxon>
        <taxon>Arthropoda</taxon>
        <taxon>Chelicerata</taxon>
        <taxon>Arachnida</taxon>
        <taxon>Acari</taxon>
        <taxon>Acariformes</taxon>
        <taxon>Sarcoptiformes</taxon>
        <taxon>Astigmata</taxon>
        <taxon>Psoroptidia</taxon>
        <taxon>Analgoidea</taxon>
        <taxon>Pyroglyphidae</taxon>
        <taxon>Dermatophagoidinae</taxon>
        <taxon>Dermatophagoides</taxon>
    </lineage>
</organism>
<proteinExistence type="evidence at protein level"/>
<dbReference type="EMBL" id="DQ078739">
    <property type="protein sequence ID" value="AAY84563.1"/>
    <property type="molecule type" value="mRNA"/>
</dbReference>
<dbReference type="SMR" id="Q4JK71"/>
<dbReference type="Allergome" id="10802">
    <property type="allergen name" value="Der p 18.0101"/>
</dbReference>
<dbReference type="Allergome" id="2699">
    <property type="allergen name" value="Der p 18"/>
</dbReference>
<dbReference type="CAZy" id="GH18">
    <property type="family name" value="Glycoside Hydrolase Family 18"/>
</dbReference>
<dbReference type="InParanoid" id="Q4JK71"/>
<dbReference type="OrthoDB" id="6498521at2759"/>
<dbReference type="Proteomes" id="UP000515146">
    <property type="component" value="Unplaced"/>
</dbReference>
<dbReference type="GO" id="GO:0005576">
    <property type="term" value="C:extracellular region"/>
    <property type="evidence" value="ECO:0000314"/>
    <property type="project" value="UniProtKB"/>
</dbReference>
<dbReference type="GO" id="GO:0008061">
    <property type="term" value="F:chitin binding"/>
    <property type="evidence" value="ECO:0000314"/>
    <property type="project" value="UniProtKB"/>
</dbReference>
<dbReference type="GO" id="GO:0004568">
    <property type="term" value="F:chitinase activity"/>
    <property type="evidence" value="ECO:0007669"/>
    <property type="project" value="TreeGrafter"/>
</dbReference>
<dbReference type="GO" id="GO:0005975">
    <property type="term" value="P:carbohydrate metabolic process"/>
    <property type="evidence" value="ECO:0007669"/>
    <property type="project" value="InterPro"/>
</dbReference>
<dbReference type="GO" id="GO:0006032">
    <property type="term" value="P:chitin catabolic process"/>
    <property type="evidence" value="ECO:0007669"/>
    <property type="project" value="TreeGrafter"/>
</dbReference>
<dbReference type="Gene3D" id="3.10.50.10">
    <property type="match status" value="1"/>
</dbReference>
<dbReference type="Gene3D" id="2.170.140.10">
    <property type="entry name" value="Chitin binding domain"/>
    <property type="match status" value="1"/>
</dbReference>
<dbReference type="Gene3D" id="3.20.20.80">
    <property type="entry name" value="Glycosidases"/>
    <property type="match status" value="1"/>
</dbReference>
<dbReference type="InterPro" id="IPR002557">
    <property type="entry name" value="Chitin-bd_dom"/>
</dbReference>
<dbReference type="InterPro" id="IPR036508">
    <property type="entry name" value="Chitin-bd_dom_sf"/>
</dbReference>
<dbReference type="InterPro" id="IPR011583">
    <property type="entry name" value="Chitinase_II/V-like_cat"/>
</dbReference>
<dbReference type="InterPro" id="IPR029070">
    <property type="entry name" value="Chitinase_insertion_sf"/>
</dbReference>
<dbReference type="InterPro" id="IPR001223">
    <property type="entry name" value="Glyco_hydro18_cat"/>
</dbReference>
<dbReference type="InterPro" id="IPR017853">
    <property type="entry name" value="Glycoside_hydrolase_SF"/>
</dbReference>
<dbReference type="InterPro" id="IPR050314">
    <property type="entry name" value="Glycosyl_Hydrlase_18"/>
</dbReference>
<dbReference type="PANTHER" id="PTHR11177">
    <property type="entry name" value="CHITINASE"/>
    <property type="match status" value="1"/>
</dbReference>
<dbReference type="PANTHER" id="PTHR11177:SF360">
    <property type="entry name" value="CHITINASE 4-RELATED"/>
    <property type="match status" value="1"/>
</dbReference>
<dbReference type="Pfam" id="PF01607">
    <property type="entry name" value="CBM_14"/>
    <property type="match status" value="1"/>
</dbReference>
<dbReference type="Pfam" id="PF00704">
    <property type="entry name" value="Glyco_hydro_18"/>
    <property type="match status" value="1"/>
</dbReference>
<dbReference type="SMART" id="SM00636">
    <property type="entry name" value="Glyco_18"/>
    <property type="match status" value="1"/>
</dbReference>
<dbReference type="SUPFAM" id="SSF51445">
    <property type="entry name" value="(Trans)glycosidases"/>
    <property type="match status" value="1"/>
</dbReference>
<dbReference type="SUPFAM" id="SSF54556">
    <property type="entry name" value="Chitinase insertion domain"/>
    <property type="match status" value="1"/>
</dbReference>
<dbReference type="SUPFAM" id="SSF57625">
    <property type="entry name" value="Invertebrate chitin-binding proteins"/>
    <property type="match status" value="1"/>
</dbReference>
<dbReference type="PROSITE" id="PS50940">
    <property type="entry name" value="CHIT_BIND_II"/>
    <property type="match status" value="1"/>
</dbReference>
<dbReference type="PROSITE" id="PS51910">
    <property type="entry name" value="GH18_2"/>
    <property type="match status" value="1"/>
</dbReference>
<reference evidence="14" key="1">
    <citation type="journal article" date="2006" name="Clin. Exp. Allergy">
        <title>The chitinase allergens Der p 15 and Der p 18 from Dermatophagoides pteronyssinus.</title>
        <authorList>
            <person name="O'Neil S.E."/>
            <person name="Heinrich T.K."/>
            <person name="Hales B.J."/>
            <person name="Hazell L.A."/>
            <person name="Holt D.C."/>
            <person name="Fischer K."/>
            <person name="Thomas W.R."/>
        </authorList>
    </citation>
    <scope>NUCLEOTIDE SEQUENCE [MRNA]</scope>
    <scope>FUNCTION</scope>
    <scope>ALLERGEN</scope>
</reference>
<reference key="2">
    <citation type="journal article" date="2013" name="Int. Arch. Allergy Immunol.">
        <title>Quantitation of IgE binding to the chitinase and chitinase-like house dust mite allergens Der p 15 and Der p 18 compared to the major and mid-range allergens.</title>
        <authorList>
            <person name="Hales B.J."/>
            <person name="Elliot C.E."/>
            <person name="Chai L.Y."/>
            <person name="Pearce L.J."/>
            <person name="Tipayanon T."/>
            <person name="Hazell L."/>
            <person name="Stone S."/>
            <person name="Piboonpocanun S."/>
            <person name="Thomas W.R."/>
            <person name="Smith W.A."/>
        </authorList>
    </citation>
    <scope>ALLERGEN</scope>
    <scope>CIRCULAR DICHROISM ANALYSIS</scope>
</reference>
<reference key="3">
    <citation type="journal article" date="2016" name="PLoS ONE">
        <title>Molecular, Structural and Immunological Characterization of Der p 18, a Chitinase-Like House Dust Mite Allergen.</title>
        <authorList>
            <person name="Resch Y."/>
            <person name="Blatt K."/>
            <person name="Malkus U."/>
            <person name="Fercher C."/>
            <person name="Swoboda I."/>
            <person name="Focke-Tejkl M."/>
            <person name="Chen K.W."/>
            <person name="Seiberler S."/>
            <person name="Mittermann I."/>
            <person name="Lupinek C."/>
            <person name="Rodriguez-Dominguez A."/>
            <person name="Zieglmayer P."/>
            <person name="Zieglmayer R."/>
            <person name="Keller W."/>
            <person name="Krzyzanek V."/>
            <person name="Valent P."/>
            <person name="Valenta R."/>
            <person name="Vrtala S."/>
        </authorList>
    </citation>
    <scope>FUNCTION</scope>
    <scope>SUBCELLULAR LOCATION</scope>
    <scope>TISSUE SPECIFICITY</scope>
    <scope>ALLERGEN</scope>
    <scope>3D-STRUCTURE MODELING</scope>
    <scope>CIRCULAR DICHROISM ANALYSIS</scope>
</reference>
<name>CHL18_DERPT</name>